<evidence type="ECO:0000255" key="1">
    <source>
        <dbReference type="HAMAP-Rule" id="MF_01529"/>
    </source>
</evidence>
<sequence length="402" mass="44384">MSRVSQARNLGKYFLLIDNMLVVLGFFVVFPLISIRFVDQMGWAAVMVGIALGLRQFIQQGLGIFGGAIADRFGAKPMIVTGMLMRAAGFATMGIAHEPWLLWFSCFLSGLGGTLFDPPRSALVVKLIRPEQRGRFFSLLMMQDSAGAVIGALLGSWLLQYDFRLVCATGAILFILCALFNAWLLPAWKLSTVRTPVREGMRRVMSDKRFVTYVLTLAGYYMLAVQVMLMLPIMVNDIAGSPAAVKWMYAIEACLSLTLLYPIARWSEKRFRLEHRLMAGLLVMSLSMLPIGMVGNLQQLFTLICAFYIGSVIAEPARETLSASLADARARGSYMGFSRLGLAIGGAIGYIGGGWLFDMGKALAQPELPWMMLGIIGFITFLALGWQFSHKRTPRRMLEPGA</sequence>
<dbReference type="EMBL" id="CP001138">
    <property type="protein sequence ID" value="ACH52555.1"/>
    <property type="molecule type" value="Genomic_DNA"/>
</dbReference>
<dbReference type="RefSeq" id="WP_000092178.1">
    <property type="nucleotide sequence ID" value="NC_011149.1"/>
</dbReference>
<dbReference type="SMR" id="B5F941"/>
<dbReference type="KEGG" id="sea:SeAg_B2022"/>
<dbReference type="HOGENOM" id="CLU_001265_60_2_6"/>
<dbReference type="Proteomes" id="UP000008819">
    <property type="component" value="Chromosome"/>
</dbReference>
<dbReference type="GO" id="GO:0005886">
    <property type="term" value="C:plasma membrane"/>
    <property type="evidence" value="ECO:0007669"/>
    <property type="project" value="UniProtKB-SubCell"/>
</dbReference>
<dbReference type="GO" id="GO:0022857">
    <property type="term" value="F:transmembrane transporter activity"/>
    <property type="evidence" value="ECO:0007669"/>
    <property type="project" value="UniProtKB-UniRule"/>
</dbReference>
<dbReference type="CDD" id="cd17329">
    <property type="entry name" value="MFS_MdtH_MDR_like"/>
    <property type="match status" value="1"/>
</dbReference>
<dbReference type="FunFam" id="1.20.1250.20:FF:000039">
    <property type="entry name" value="Multidrug resistance protein MdtH"/>
    <property type="match status" value="1"/>
</dbReference>
<dbReference type="Gene3D" id="1.20.1250.20">
    <property type="entry name" value="MFS general substrate transporter like domains"/>
    <property type="match status" value="1"/>
</dbReference>
<dbReference type="HAMAP" id="MF_01529">
    <property type="entry name" value="MFS_MdtH"/>
    <property type="match status" value="1"/>
</dbReference>
<dbReference type="InterPro" id="IPR011701">
    <property type="entry name" value="MFS"/>
</dbReference>
<dbReference type="InterPro" id="IPR020846">
    <property type="entry name" value="MFS_dom"/>
</dbReference>
<dbReference type="InterPro" id="IPR036259">
    <property type="entry name" value="MFS_trans_sf"/>
</dbReference>
<dbReference type="InterPro" id="IPR050171">
    <property type="entry name" value="MFS_Transporters"/>
</dbReference>
<dbReference type="InterPro" id="IPR022855">
    <property type="entry name" value="Multidrug-R_MdtH"/>
</dbReference>
<dbReference type="NCBIfam" id="NF008650">
    <property type="entry name" value="PRK11646.1"/>
    <property type="match status" value="1"/>
</dbReference>
<dbReference type="PANTHER" id="PTHR23517:SF2">
    <property type="entry name" value="MULTIDRUG RESISTANCE PROTEIN MDTH"/>
    <property type="match status" value="1"/>
</dbReference>
<dbReference type="PANTHER" id="PTHR23517">
    <property type="entry name" value="RESISTANCE PROTEIN MDTM, PUTATIVE-RELATED-RELATED"/>
    <property type="match status" value="1"/>
</dbReference>
<dbReference type="Pfam" id="PF07690">
    <property type="entry name" value="MFS_1"/>
    <property type="match status" value="1"/>
</dbReference>
<dbReference type="SUPFAM" id="SSF103473">
    <property type="entry name" value="MFS general substrate transporter"/>
    <property type="match status" value="1"/>
</dbReference>
<dbReference type="PROSITE" id="PS50850">
    <property type="entry name" value="MFS"/>
    <property type="match status" value="1"/>
</dbReference>
<name>MDTH_SALA4</name>
<accession>B5F941</accession>
<protein>
    <recommendedName>
        <fullName evidence="1">Multidrug resistance protein MdtH</fullName>
    </recommendedName>
</protein>
<comment type="subcellular location">
    <subcellularLocation>
        <location evidence="1">Cell inner membrane</location>
        <topology evidence="1">Multi-pass membrane protein</topology>
    </subcellularLocation>
</comment>
<comment type="similarity">
    <text evidence="1">Belongs to the major facilitator superfamily. DHA1 family. MdtH (TC 2.A.1.2.21) subfamily.</text>
</comment>
<proteinExistence type="inferred from homology"/>
<feature type="chain" id="PRO_1000200804" description="Multidrug resistance protein MdtH">
    <location>
        <begin position="1"/>
        <end position="402"/>
    </location>
</feature>
<feature type="topological domain" description="Cytoplasmic" evidence="1">
    <location>
        <begin position="1"/>
        <end position="12"/>
    </location>
</feature>
<feature type="transmembrane region" description="Helical" evidence="1">
    <location>
        <begin position="13"/>
        <end position="33"/>
    </location>
</feature>
<feature type="topological domain" description="Periplasmic" evidence="1">
    <location>
        <begin position="34"/>
        <end position="98"/>
    </location>
</feature>
<feature type="transmembrane region" description="Helical" evidence="1">
    <location>
        <begin position="99"/>
        <end position="116"/>
    </location>
</feature>
<feature type="topological domain" description="Cytoplasmic" evidence="1">
    <location>
        <begin position="117"/>
        <end position="138"/>
    </location>
</feature>
<feature type="transmembrane region" description="Helical" evidence="1">
    <location>
        <begin position="139"/>
        <end position="159"/>
    </location>
</feature>
<feature type="topological domain" description="Periplasmic" evidence="1">
    <location>
        <begin position="160"/>
        <end position="164"/>
    </location>
</feature>
<feature type="transmembrane region" description="Helical" evidence="1">
    <location>
        <begin position="165"/>
        <end position="185"/>
    </location>
</feature>
<feature type="topological domain" description="Cytoplasmic" evidence="1">
    <location>
        <begin position="186"/>
        <end position="213"/>
    </location>
</feature>
<feature type="transmembrane region" description="Helical" evidence="1">
    <location>
        <begin position="214"/>
        <end position="234"/>
    </location>
</feature>
<feature type="topological domain" description="Periplasmic" evidence="1">
    <location>
        <begin position="235"/>
        <end position="243"/>
    </location>
</feature>
<feature type="transmembrane region" description="Helical" evidence="1">
    <location>
        <begin position="244"/>
        <end position="264"/>
    </location>
</feature>
<feature type="topological domain" description="Cytoplasmic" evidence="1">
    <location>
        <begin position="265"/>
        <end position="276"/>
    </location>
</feature>
<feature type="transmembrane region" description="Helical" evidence="1">
    <location>
        <begin position="277"/>
        <end position="297"/>
    </location>
</feature>
<feature type="topological domain" description="Periplasmic" evidence="1">
    <location>
        <begin position="298"/>
        <end position="299"/>
    </location>
</feature>
<feature type="transmembrane region" description="Helical" evidence="1">
    <location>
        <begin position="300"/>
        <end position="320"/>
    </location>
</feature>
<feature type="topological domain" description="Cytoplasmic" evidence="1">
    <location>
        <begin position="321"/>
        <end position="339"/>
    </location>
</feature>
<feature type="transmembrane region" description="Helical" evidence="1">
    <location>
        <begin position="340"/>
        <end position="360"/>
    </location>
</feature>
<feature type="topological domain" description="Periplasmic" evidence="1">
    <location>
        <begin position="361"/>
        <end position="367"/>
    </location>
</feature>
<feature type="transmembrane region" description="Helical" evidence="1">
    <location>
        <begin position="368"/>
        <end position="388"/>
    </location>
</feature>
<feature type="topological domain" description="Cytoplasmic" evidence="1">
    <location>
        <begin position="389"/>
        <end position="402"/>
    </location>
</feature>
<keyword id="KW-0997">Cell inner membrane</keyword>
<keyword id="KW-1003">Cell membrane</keyword>
<keyword id="KW-0472">Membrane</keyword>
<keyword id="KW-0812">Transmembrane</keyword>
<keyword id="KW-1133">Transmembrane helix</keyword>
<keyword id="KW-0813">Transport</keyword>
<organism>
    <name type="scientific">Salmonella agona (strain SL483)</name>
    <dbReference type="NCBI Taxonomy" id="454166"/>
    <lineage>
        <taxon>Bacteria</taxon>
        <taxon>Pseudomonadati</taxon>
        <taxon>Pseudomonadota</taxon>
        <taxon>Gammaproteobacteria</taxon>
        <taxon>Enterobacterales</taxon>
        <taxon>Enterobacteriaceae</taxon>
        <taxon>Salmonella</taxon>
    </lineage>
</organism>
<gene>
    <name evidence="1" type="primary">mdtH</name>
    <name type="ordered locus">SeAg_B2022</name>
</gene>
<reference key="1">
    <citation type="journal article" date="2011" name="J. Bacteriol.">
        <title>Comparative genomics of 28 Salmonella enterica isolates: evidence for CRISPR-mediated adaptive sublineage evolution.</title>
        <authorList>
            <person name="Fricke W.F."/>
            <person name="Mammel M.K."/>
            <person name="McDermott P.F."/>
            <person name="Tartera C."/>
            <person name="White D.G."/>
            <person name="Leclerc J.E."/>
            <person name="Ravel J."/>
            <person name="Cebula T.A."/>
        </authorList>
    </citation>
    <scope>NUCLEOTIDE SEQUENCE [LARGE SCALE GENOMIC DNA]</scope>
    <source>
        <strain>SL483</strain>
    </source>
</reference>